<reference key="1">
    <citation type="submission" date="2007-10" db="EMBL/GenBank/DDBJ databases">
        <title>Complete sequence of Shewanella pealeana ATCC 700345.</title>
        <authorList>
            <consortium name="US DOE Joint Genome Institute"/>
            <person name="Copeland A."/>
            <person name="Lucas S."/>
            <person name="Lapidus A."/>
            <person name="Barry K."/>
            <person name="Glavina del Rio T."/>
            <person name="Dalin E."/>
            <person name="Tice H."/>
            <person name="Pitluck S."/>
            <person name="Chertkov O."/>
            <person name="Brettin T."/>
            <person name="Bruce D."/>
            <person name="Detter J.C."/>
            <person name="Han C."/>
            <person name="Schmutz J."/>
            <person name="Larimer F."/>
            <person name="Land M."/>
            <person name="Hauser L."/>
            <person name="Kyrpides N."/>
            <person name="Kim E."/>
            <person name="Zhao J.-S.Z."/>
            <person name="Manno D."/>
            <person name="Hawari J."/>
            <person name="Richardson P."/>
        </authorList>
    </citation>
    <scope>NUCLEOTIDE SEQUENCE [LARGE SCALE GENOMIC DNA]</scope>
    <source>
        <strain>ATCC 700345 / ANG-SQ1</strain>
    </source>
</reference>
<name>SYC_SHEPA</name>
<sequence length="459" mass="52034">MLKLYNSLTRQKEQFVPLQPGKVGMYVCGVTIYDLCHIGHGRTFVSFDMIVRYLRYSGYDVNFQRNITDVDDKIIKRANENKESCDSLTERLIAEMHRDFDALNMARPDNEPRATLHMPEIIEMVEKLIEREHAYVASNGDVLFSVSSFPEYGRLSGQNLEQLQAGARVEVEDAKRDPMDFVLWKMSKPGEPTWESPWGPGRPGWHIECSAMNSKHLGNHFDIHGGGSDLQFPHHENEIAQSCCAHDTPYVNYWMHTGMVMVDKEKMSKSLNNFFTIRDVLGHYDATTVRYFLLSGHYRSQLNYSEDNLKQAKSGLERIYTALKDLDLTVEAAPAEEFVAKFKSAMDDDFNTPEAYSVLFDMVREINRLKATDMAKASALGVALKQLADVLGILGQDVDTFFKGEGNDDEVAEIEALIVERNRARAEKDWPAADVARDGLNALGVILEDGPEGTTWRKK</sequence>
<feature type="chain" id="PRO_0000332904" description="Cysteine--tRNA ligase">
    <location>
        <begin position="1"/>
        <end position="459"/>
    </location>
</feature>
<feature type="short sequence motif" description="'HIGH' region">
    <location>
        <begin position="30"/>
        <end position="40"/>
    </location>
</feature>
<feature type="short sequence motif" description="'KMSKS' region">
    <location>
        <begin position="266"/>
        <end position="270"/>
    </location>
</feature>
<feature type="binding site" evidence="1">
    <location>
        <position position="28"/>
    </location>
    <ligand>
        <name>Zn(2+)</name>
        <dbReference type="ChEBI" id="CHEBI:29105"/>
    </ligand>
</feature>
<feature type="binding site" evidence="1">
    <location>
        <position position="209"/>
    </location>
    <ligand>
        <name>Zn(2+)</name>
        <dbReference type="ChEBI" id="CHEBI:29105"/>
    </ligand>
</feature>
<feature type="binding site" evidence="1">
    <location>
        <position position="234"/>
    </location>
    <ligand>
        <name>Zn(2+)</name>
        <dbReference type="ChEBI" id="CHEBI:29105"/>
    </ligand>
</feature>
<feature type="binding site" evidence="1">
    <location>
        <position position="238"/>
    </location>
    <ligand>
        <name>Zn(2+)</name>
        <dbReference type="ChEBI" id="CHEBI:29105"/>
    </ligand>
</feature>
<feature type="binding site" evidence="1">
    <location>
        <position position="269"/>
    </location>
    <ligand>
        <name>ATP</name>
        <dbReference type="ChEBI" id="CHEBI:30616"/>
    </ligand>
</feature>
<accession>A8H617</accession>
<proteinExistence type="inferred from homology"/>
<organism>
    <name type="scientific">Shewanella pealeana (strain ATCC 700345 / ANG-SQ1)</name>
    <dbReference type="NCBI Taxonomy" id="398579"/>
    <lineage>
        <taxon>Bacteria</taxon>
        <taxon>Pseudomonadati</taxon>
        <taxon>Pseudomonadota</taxon>
        <taxon>Gammaproteobacteria</taxon>
        <taxon>Alteromonadales</taxon>
        <taxon>Shewanellaceae</taxon>
        <taxon>Shewanella</taxon>
    </lineage>
</organism>
<keyword id="KW-0030">Aminoacyl-tRNA synthetase</keyword>
<keyword id="KW-0067">ATP-binding</keyword>
<keyword id="KW-0963">Cytoplasm</keyword>
<keyword id="KW-0436">Ligase</keyword>
<keyword id="KW-0479">Metal-binding</keyword>
<keyword id="KW-0547">Nucleotide-binding</keyword>
<keyword id="KW-0648">Protein biosynthesis</keyword>
<keyword id="KW-1185">Reference proteome</keyword>
<keyword id="KW-0862">Zinc</keyword>
<dbReference type="EC" id="6.1.1.16" evidence="1"/>
<dbReference type="EMBL" id="CP000851">
    <property type="protein sequence ID" value="ABV88004.1"/>
    <property type="molecule type" value="Genomic_DNA"/>
</dbReference>
<dbReference type="RefSeq" id="WP_012155910.1">
    <property type="nucleotide sequence ID" value="NC_009901.1"/>
</dbReference>
<dbReference type="SMR" id="A8H617"/>
<dbReference type="STRING" id="398579.Spea_2684"/>
<dbReference type="KEGG" id="spl:Spea_2684"/>
<dbReference type="eggNOG" id="COG0215">
    <property type="taxonomic scope" value="Bacteria"/>
</dbReference>
<dbReference type="HOGENOM" id="CLU_013528_0_1_6"/>
<dbReference type="OrthoDB" id="9815130at2"/>
<dbReference type="Proteomes" id="UP000002608">
    <property type="component" value="Chromosome"/>
</dbReference>
<dbReference type="GO" id="GO:0005829">
    <property type="term" value="C:cytosol"/>
    <property type="evidence" value="ECO:0007669"/>
    <property type="project" value="TreeGrafter"/>
</dbReference>
<dbReference type="GO" id="GO:0005524">
    <property type="term" value="F:ATP binding"/>
    <property type="evidence" value="ECO:0007669"/>
    <property type="project" value="UniProtKB-UniRule"/>
</dbReference>
<dbReference type="GO" id="GO:0004817">
    <property type="term" value="F:cysteine-tRNA ligase activity"/>
    <property type="evidence" value="ECO:0007669"/>
    <property type="project" value="UniProtKB-UniRule"/>
</dbReference>
<dbReference type="GO" id="GO:0008270">
    <property type="term" value="F:zinc ion binding"/>
    <property type="evidence" value="ECO:0007669"/>
    <property type="project" value="UniProtKB-UniRule"/>
</dbReference>
<dbReference type="GO" id="GO:0006423">
    <property type="term" value="P:cysteinyl-tRNA aminoacylation"/>
    <property type="evidence" value="ECO:0007669"/>
    <property type="project" value="UniProtKB-UniRule"/>
</dbReference>
<dbReference type="CDD" id="cd07963">
    <property type="entry name" value="Anticodon_Ia_Cys"/>
    <property type="match status" value="1"/>
</dbReference>
<dbReference type="CDD" id="cd00672">
    <property type="entry name" value="CysRS_core"/>
    <property type="match status" value="1"/>
</dbReference>
<dbReference type="FunFam" id="1.20.120.1910:FF:000001">
    <property type="entry name" value="Cysteine--tRNA ligase"/>
    <property type="match status" value="1"/>
</dbReference>
<dbReference type="FunFam" id="3.40.50.620:FF:000009">
    <property type="entry name" value="Cysteine--tRNA ligase"/>
    <property type="match status" value="1"/>
</dbReference>
<dbReference type="Gene3D" id="1.20.120.1910">
    <property type="entry name" value="Cysteine-tRNA ligase, C-terminal anti-codon recognition domain"/>
    <property type="match status" value="1"/>
</dbReference>
<dbReference type="Gene3D" id="3.40.50.620">
    <property type="entry name" value="HUPs"/>
    <property type="match status" value="1"/>
</dbReference>
<dbReference type="HAMAP" id="MF_00041">
    <property type="entry name" value="Cys_tRNA_synth"/>
    <property type="match status" value="1"/>
</dbReference>
<dbReference type="InterPro" id="IPR015803">
    <property type="entry name" value="Cys-tRNA-ligase"/>
</dbReference>
<dbReference type="InterPro" id="IPR015273">
    <property type="entry name" value="Cys-tRNA-synt_Ia_DALR"/>
</dbReference>
<dbReference type="InterPro" id="IPR024909">
    <property type="entry name" value="Cys-tRNA/MSH_ligase"/>
</dbReference>
<dbReference type="InterPro" id="IPR056411">
    <property type="entry name" value="CysS_C"/>
</dbReference>
<dbReference type="InterPro" id="IPR014729">
    <property type="entry name" value="Rossmann-like_a/b/a_fold"/>
</dbReference>
<dbReference type="InterPro" id="IPR032678">
    <property type="entry name" value="tRNA-synt_1_cat_dom"/>
</dbReference>
<dbReference type="InterPro" id="IPR009080">
    <property type="entry name" value="tRNAsynth_Ia_anticodon-bd"/>
</dbReference>
<dbReference type="NCBIfam" id="TIGR00435">
    <property type="entry name" value="cysS"/>
    <property type="match status" value="1"/>
</dbReference>
<dbReference type="PANTHER" id="PTHR10890:SF3">
    <property type="entry name" value="CYSTEINE--TRNA LIGASE, CYTOPLASMIC"/>
    <property type="match status" value="1"/>
</dbReference>
<dbReference type="PANTHER" id="PTHR10890">
    <property type="entry name" value="CYSTEINYL-TRNA SYNTHETASE"/>
    <property type="match status" value="1"/>
</dbReference>
<dbReference type="Pfam" id="PF23493">
    <property type="entry name" value="CysS_C"/>
    <property type="match status" value="1"/>
</dbReference>
<dbReference type="Pfam" id="PF09190">
    <property type="entry name" value="DALR_2"/>
    <property type="match status" value="1"/>
</dbReference>
<dbReference type="Pfam" id="PF01406">
    <property type="entry name" value="tRNA-synt_1e"/>
    <property type="match status" value="1"/>
</dbReference>
<dbReference type="PRINTS" id="PR00983">
    <property type="entry name" value="TRNASYNTHCYS"/>
</dbReference>
<dbReference type="SMART" id="SM00840">
    <property type="entry name" value="DALR_2"/>
    <property type="match status" value="1"/>
</dbReference>
<dbReference type="SUPFAM" id="SSF47323">
    <property type="entry name" value="Anticodon-binding domain of a subclass of class I aminoacyl-tRNA synthetases"/>
    <property type="match status" value="1"/>
</dbReference>
<dbReference type="SUPFAM" id="SSF52374">
    <property type="entry name" value="Nucleotidylyl transferase"/>
    <property type="match status" value="1"/>
</dbReference>
<protein>
    <recommendedName>
        <fullName evidence="1">Cysteine--tRNA ligase</fullName>
        <ecNumber evidence="1">6.1.1.16</ecNumber>
    </recommendedName>
    <alternativeName>
        <fullName evidence="1">Cysteinyl-tRNA synthetase</fullName>
        <shortName evidence="1">CysRS</shortName>
    </alternativeName>
</protein>
<comment type="catalytic activity">
    <reaction evidence="1">
        <text>tRNA(Cys) + L-cysteine + ATP = L-cysteinyl-tRNA(Cys) + AMP + diphosphate</text>
        <dbReference type="Rhea" id="RHEA:17773"/>
        <dbReference type="Rhea" id="RHEA-COMP:9661"/>
        <dbReference type="Rhea" id="RHEA-COMP:9679"/>
        <dbReference type="ChEBI" id="CHEBI:30616"/>
        <dbReference type="ChEBI" id="CHEBI:33019"/>
        <dbReference type="ChEBI" id="CHEBI:35235"/>
        <dbReference type="ChEBI" id="CHEBI:78442"/>
        <dbReference type="ChEBI" id="CHEBI:78517"/>
        <dbReference type="ChEBI" id="CHEBI:456215"/>
        <dbReference type="EC" id="6.1.1.16"/>
    </reaction>
</comment>
<comment type="cofactor">
    <cofactor evidence="1">
        <name>Zn(2+)</name>
        <dbReference type="ChEBI" id="CHEBI:29105"/>
    </cofactor>
    <text evidence="1">Binds 1 zinc ion per subunit.</text>
</comment>
<comment type="subunit">
    <text evidence="1">Monomer.</text>
</comment>
<comment type="subcellular location">
    <subcellularLocation>
        <location evidence="1">Cytoplasm</location>
    </subcellularLocation>
</comment>
<comment type="similarity">
    <text evidence="1">Belongs to the class-I aminoacyl-tRNA synthetase family.</text>
</comment>
<evidence type="ECO:0000255" key="1">
    <source>
        <dbReference type="HAMAP-Rule" id="MF_00041"/>
    </source>
</evidence>
<gene>
    <name evidence="1" type="primary">cysS</name>
    <name type="ordered locus">Spea_2684</name>
</gene>